<protein>
    <recommendedName>
        <fullName evidence="1">Fe/S biogenesis protein NfuA</fullName>
    </recommendedName>
</protein>
<feature type="chain" id="PRO_1000186789" description="Fe/S biogenesis protein NfuA">
    <location>
        <begin position="1"/>
        <end position="199"/>
    </location>
</feature>
<feature type="binding site" evidence="1">
    <location>
        <position position="151"/>
    </location>
    <ligand>
        <name>[4Fe-4S] cluster</name>
        <dbReference type="ChEBI" id="CHEBI:49883"/>
    </ligand>
</feature>
<feature type="binding site" evidence="1">
    <location>
        <position position="154"/>
    </location>
    <ligand>
        <name>[4Fe-4S] cluster</name>
        <dbReference type="ChEBI" id="CHEBI:49883"/>
    </ligand>
</feature>
<dbReference type="EMBL" id="CP000050">
    <property type="protein sequence ID" value="AAY49159.1"/>
    <property type="molecule type" value="Genomic_DNA"/>
</dbReference>
<dbReference type="RefSeq" id="WP_011037235.1">
    <property type="nucleotide sequence ID" value="NZ_CP155948.1"/>
</dbReference>
<dbReference type="SMR" id="Q4UUW4"/>
<dbReference type="KEGG" id="xcb:XC_2103"/>
<dbReference type="HOGENOM" id="CLU_094569_0_0_6"/>
<dbReference type="Proteomes" id="UP000000420">
    <property type="component" value="Chromosome"/>
</dbReference>
<dbReference type="GO" id="GO:0051539">
    <property type="term" value="F:4 iron, 4 sulfur cluster binding"/>
    <property type="evidence" value="ECO:0007669"/>
    <property type="project" value="UniProtKB-UniRule"/>
</dbReference>
<dbReference type="GO" id="GO:0005506">
    <property type="term" value="F:iron ion binding"/>
    <property type="evidence" value="ECO:0007669"/>
    <property type="project" value="InterPro"/>
</dbReference>
<dbReference type="GO" id="GO:0016226">
    <property type="term" value="P:iron-sulfur cluster assembly"/>
    <property type="evidence" value="ECO:0007669"/>
    <property type="project" value="UniProtKB-UniRule"/>
</dbReference>
<dbReference type="GO" id="GO:0051604">
    <property type="term" value="P:protein maturation"/>
    <property type="evidence" value="ECO:0007669"/>
    <property type="project" value="UniProtKB-UniRule"/>
</dbReference>
<dbReference type="Gene3D" id="3.30.300.130">
    <property type="entry name" value="Fe-S cluster assembly (FSCA)"/>
    <property type="match status" value="1"/>
</dbReference>
<dbReference type="Gene3D" id="2.60.300.12">
    <property type="entry name" value="HesB-like domain"/>
    <property type="match status" value="1"/>
</dbReference>
<dbReference type="HAMAP" id="MF_01637">
    <property type="entry name" value="Fe_S_biogen_NfuA"/>
    <property type="match status" value="1"/>
</dbReference>
<dbReference type="InterPro" id="IPR017726">
    <property type="entry name" value="Fe/S_biogenesis_protein_NfuA"/>
</dbReference>
<dbReference type="InterPro" id="IPR034904">
    <property type="entry name" value="FSCA_dom_sf"/>
</dbReference>
<dbReference type="InterPro" id="IPR035903">
    <property type="entry name" value="HesB-like_dom_sf"/>
</dbReference>
<dbReference type="InterPro" id="IPR001075">
    <property type="entry name" value="NIF_FeS_clus_asmbl_NifU_C"/>
</dbReference>
<dbReference type="PANTHER" id="PTHR11178:SF51">
    <property type="entry name" value="FE_S BIOGENESIS PROTEIN NFUA"/>
    <property type="match status" value="1"/>
</dbReference>
<dbReference type="PANTHER" id="PTHR11178">
    <property type="entry name" value="IRON-SULFUR CLUSTER SCAFFOLD PROTEIN NFU-RELATED"/>
    <property type="match status" value="1"/>
</dbReference>
<dbReference type="Pfam" id="PF01106">
    <property type="entry name" value="NifU"/>
    <property type="match status" value="1"/>
</dbReference>
<dbReference type="SUPFAM" id="SSF117916">
    <property type="entry name" value="Fe-S cluster assembly (FSCA) domain-like"/>
    <property type="match status" value="1"/>
</dbReference>
<dbReference type="SUPFAM" id="SSF89360">
    <property type="entry name" value="HesB-like domain"/>
    <property type="match status" value="1"/>
</dbReference>
<comment type="function">
    <text evidence="1">Involved in iron-sulfur cluster biogenesis. Binds a 4Fe-4S cluster, can transfer this cluster to apoproteins, and thereby intervenes in the maturation of Fe/S proteins. Could also act as a scaffold/chaperone for damaged Fe/S proteins.</text>
</comment>
<comment type="cofactor">
    <cofactor evidence="1">
        <name>[4Fe-4S] cluster</name>
        <dbReference type="ChEBI" id="CHEBI:49883"/>
    </cofactor>
    <text evidence="1">Binds 1 [4Fe-4S] cluster per subunit. The cluster is presumably bound at the interface of two monomers.</text>
</comment>
<comment type="subunit">
    <text evidence="1">Homodimer.</text>
</comment>
<comment type="similarity">
    <text evidence="1">Belongs to the NfuA family.</text>
</comment>
<organism>
    <name type="scientific">Xanthomonas campestris pv. campestris (strain 8004)</name>
    <dbReference type="NCBI Taxonomy" id="314565"/>
    <lineage>
        <taxon>Bacteria</taxon>
        <taxon>Pseudomonadati</taxon>
        <taxon>Pseudomonadota</taxon>
        <taxon>Gammaproteobacteria</taxon>
        <taxon>Lysobacterales</taxon>
        <taxon>Lysobacteraceae</taxon>
        <taxon>Xanthomonas</taxon>
    </lineage>
</organism>
<proteinExistence type="inferred from homology"/>
<keyword id="KW-0004">4Fe-4S</keyword>
<keyword id="KW-0408">Iron</keyword>
<keyword id="KW-0411">Iron-sulfur</keyword>
<keyword id="KW-0479">Metal-binding</keyword>
<reference key="1">
    <citation type="journal article" date="2005" name="Genome Res.">
        <title>Comparative and functional genomic analyses of the pathogenicity of phytopathogen Xanthomonas campestris pv. campestris.</title>
        <authorList>
            <person name="Qian W."/>
            <person name="Jia Y."/>
            <person name="Ren S.-X."/>
            <person name="He Y.-Q."/>
            <person name="Feng J.-X."/>
            <person name="Lu L.-F."/>
            <person name="Sun Q."/>
            <person name="Ying G."/>
            <person name="Tang D.-J."/>
            <person name="Tang H."/>
            <person name="Wu W."/>
            <person name="Hao P."/>
            <person name="Wang L."/>
            <person name="Jiang B.-L."/>
            <person name="Zeng S."/>
            <person name="Gu W.-Y."/>
            <person name="Lu G."/>
            <person name="Rong L."/>
            <person name="Tian Y."/>
            <person name="Yao Z."/>
            <person name="Fu G."/>
            <person name="Chen B."/>
            <person name="Fang R."/>
            <person name="Qiang B."/>
            <person name="Chen Z."/>
            <person name="Zhao G.-P."/>
            <person name="Tang J.-L."/>
            <person name="He C."/>
        </authorList>
    </citation>
    <scope>NUCLEOTIDE SEQUENCE [LARGE SCALE GENOMIC DNA]</scope>
    <source>
        <strain>8004</strain>
    </source>
</reference>
<accession>Q4UUW4</accession>
<sequence length="199" mass="21170">MIQISDKAQTYFRKLIEREGVPGMGVRLSAVDAGTPRADAKLEFAEPADLSGDEWAIDCDGFTLYVVAASVPWMDGAEIDYVTQSTGNQQLTIKAPKIKGEAPAESASMVERVRWVVENEINPQLASHGGRVAVQEVSAEGVVLLRFGGGCHGCGMADVTLKQGIEKTLMGRLPGVIAVRDATDHATGDAPYIPRDSAA</sequence>
<name>NFUA_XANC8</name>
<evidence type="ECO:0000255" key="1">
    <source>
        <dbReference type="HAMAP-Rule" id="MF_01637"/>
    </source>
</evidence>
<gene>
    <name evidence="1" type="primary">nfuA</name>
    <name type="ordered locus">XC_2103</name>
</gene>